<organism>
    <name type="scientific">Escherichia coli (strain ATCC 8739 / DSM 1576 / NBRC 3972 / NCIMB 8545 / WDCM 00012 / Crooks)</name>
    <dbReference type="NCBI Taxonomy" id="481805"/>
    <lineage>
        <taxon>Bacteria</taxon>
        <taxon>Pseudomonadati</taxon>
        <taxon>Pseudomonadota</taxon>
        <taxon>Gammaproteobacteria</taxon>
        <taxon>Enterobacterales</taxon>
        <taxon>Enterobacteriaceae</taxon>
        <taxon>Escherichia</taxon>
    </lineage>
</organism>
<evidence type="ECO:0000255" key="1">
    <source>
        <dbReference type="HAMAP-Rule" id="MF_01304"/>
    </source>
</evidence>
<dbReference type="EMBL" id="CP000946">
    <property type="protein sequence ID" value="ACA78476.1"/>
    <property type="molecule type" value="Genomic_DNA"/>
</dbReference>
<dbReference type="SMR" id="B1IXH3"/>
<dbReference type="KEGG" id="ecl:EcolC_2848"/>
<dbReference type="HOGENOM" id="CLU_018816_6_3_6"/>
<dbReference type="GO" id="GO:0042597">
    <property type="term" value="C:periplasmic space"/>
    <property type="evidence" value="ECO:0007669"/>
    <property type="project" value="UniProtKB-SubCell"/>
</dbReference>
<dbReference type="FunFam" id="1.10.287.470:FF:000004">
    <property type="entry name" value="UPF0194 membrane protein YbhG"/>
    <property type="match status" value="1"/>
</dbReference>
<dbReference type="FunFam" id="2.40.30.170:FF:000005">
    <property type="entry name" value="UPF0194 membrane protein YbhG"/>
    <property type="match status" value="1"/>
</dbReference>
<dbReference type="FunFam" id="2.40.50.100:FF:000025">
    <property type="entry name" value="UPF0194 membrane protein YbhG"/>
    <property type="match status" value="1"/>
</dbReference>
<dbReference type="Gene3D" id="2.40.30.170">
    <property type="match status" value="1"/>
</dbReference>
<dbReference type="Gene3D" id="2.40.50.100">
    <property type="match status" value="2"/>
</dbReference>
<dbReference type="Gene3D" id="1.10.287.470">
    <property type="entry name" value="Helix hairpin bin"/>
    <property type="match status" value="2"/>
</dbReference>
<dbReference type="HAMAP" id="MF_01304">
    <property type="entry name" value="UPF0194"/>
    <property type="match status" value="1"/>
</dbReference>
<dbReference type="InterPro" id="IPR032317">
    <property type="entry name" value="CusB_D23"/>
</dbReference>
<dbReference type="InterPro" id="IPR022936">
    <property type="entry name" value="UPF0194_membrane_YbhG"/>
</dbReference>
<dbReference type="InterPro" id="IPR050465">
    <property type="entry name" value="UPF0194_transport"/>
</dbReference>
<dbReference type="NCBIfam" id="NF002939">
    <property type="entry name" value="PRK03598.1"/>
    <property type="match status" value="1"/>
</dbReference>
<dbReference type="PANTHER" id="PTHR32347">
    <property type="entry name" value="EFFLUX SYSTEM COMPONENT YKNX-RELATED"/>
    <property type="match status" value="1"/>
</dbReference>
<dbReference type="PANTHER" id="PTHR32347:SF29">
    <property type="entry name" value="UPF0194 MEMBRANE PROTEIN YBHG"/>
    <property type="match status" value="1"/>
</dbReference>
<dbReference type="Pfam" id="PF16576">
    <property type="entry name" value="HlyD_D23"/>
    <property type="match status" value="1"/>
</dbReference>
<dbReference type="SUPFAM" id="SSF111369">
    <property type="entry name" value="HlyD-like secretion proteins"/>
    <property type="match status" value="3"/>
</dbReference>
<feature type="signal peptide" evidence="1">
    <location>
        <begin position="1"/>
        <end position="15"/>
    </location>
</feature>
<feature type="chain" id="PRO_1000085954" description="UPF0194 membrane protein YbhG">
    <location>
        <begin position="16"/>
        <end position="331"/>
    </location>
</feature>
<feature type="coiled-coil region" evidence="1">
    <location>
        <begin position="107"/>
        <end position="208"/>
    </location>
</feature>
<protein>
    <recommendedName>
        <fullName evidence="1">UPF0194 membrane protein YbhG</fullName>
    </recommendedName>
</protein>
<accession>B1IXH3</accession>
<comment type="subcellular location">
    <subcellularLocation>
        <location evidence="1">Periplasm</location>
    </subcellularLocation>
</comment>
<comment type="similarity">
    <text evidence="1">Belongs to the UPF0194 family.</text>
</comment>
<sequence length="331" mass="36286">MKKPVVIGLAVVVLAAVVAGGYWWYQSRQDNGLTLYGNVDIRTVNLSFRVGGRVESLAVDEGDAIKAGQVLGELDHKPYEIALMQAKAGVSVAQAQYDLMLAGYRDEEIAQAAAAVKQAQAAYDYAQNFYNRQQGLWKSRTISANDLENARSSRDQAQATLKSAQDKLRQYRSGNREQDIAQAKASLEQAQAQLAQAELNLQDSTLIAPSDGTLLTRAVEPGTVLNEGGTVFTVSLTRPVWVRAYVDERNLDQAQPGRKVLLYTDGRPDKPYHGQIGFVSPTAEFTPKTVETPDLRTDLVYRLRIVVTDADDALRQGMPVTVQFGDEAGHE</sequence>
<reference key="1">
    <citation type="submission" date="2008-02" db="EMBL/GenBank/DDBJ databases">
        <title>Complete sequence of Escherichia coli C str. ATCC 8739.</title>
        <authorList>
            <person name="Copeland A."/>
            <person name="Lucas S."/>
            <person name="Lapidus A."/>
            <person name="Glavina del Rio T."/>
            <person name="Dalin E."/>
            <person name="Tice H."/>
            <person name="Bruce D."/>
            <person name="Goodwin L."/>
            <person name="Pitluck S."/>
            <person name="Kiss H."/>
            <person name="Brettin T."/>
            <person name="Detter J.C."/>
            <person name="Han C."/>
            <person name="Kuske C.R."/>
            <person name="Schmutz J."/>
            <person name="Larimer F."/>
            <person name="Land M."/>
            <person name="Hauser L."/>
            <person name="Kyrpides N."/>
            <person name="Mikhailova N."/>
            <person name="Ingram L."/>
            <person name="Richardson P."/>
        </authorList>
    </citation>
    <scope>NUCLEOTIDE SEQUENCE [LARGE SCALE GENOMIC DNA]</scope>
    <source>
        <strain>ATCC 8739 / DSM 1576 / NBRC 3972 / NCIMB 8545 / WDCM 00012 / Crooks</strain>
    </source>
</reference>
<keyword id="KW-0175">Coiled coil</keyword>
<keyword id="KW-0574">Periplasm</keyword>
<keyword id="KW-0732">Signal</keyword>
<gene>
    <name evidence="1" type="primary">ybhG</name>
    <name type="ordered locus">EcolC_2848</name>
</gene>
<proteinExistence type="inferred from homology"/>
<name>YBHG_ECOLC</name>